<dbReference type="EMBL" id="AF410884">
    <property type="protein sequence ID" value="AAL10209.1"/>
    <property type="molecule type" value="Genomic_DNA"/>
</dbReference>
<dbReference type="SMR" id="Q93CB6"/>
<dbReference type="GO" id="GO:0005886">
    <property type="term" value="C:plasma membrane"/>
    <property type="evidence" value="ECO:0007669"/>
    <property type="project" value="UniProtKB-SubCell"/>
</dbReference>
<dbReference type="HAMAP" id="MF_01373">
    <property type="entry name" value="LpqB_lipoprot"/>
    <property type="match status" value="1"/>
</dbReference>
<dbReference type="InterPro" id="IPR019606">
    <property type="entry name" value="GerMN"/>
</dbReference>
<dbReference type="InterPro" id="IPR023959">
    <property type="entry name" value="Lipoprotein_LpqB"/>
</dbReference>
<dbReference type="InterPro" id="IPR018910">
    <property type="entry name" value="Lipoprotein_LpqB_C"/>
</dbReference>
<dbReference type="NCBIfam" id="NF010141">
    <property type="entry name" value="PRK13616.1"/>
    <property type="match status" value="1"/>
</dbReference>
<dbReference type="Pfam" id="PF10646">
    <property type="entry name" value="Germane"/>
    <property type="match status" value="1"/>
</dbReference>
<dbReference type="Pfam" id="PF10647">
    <property type="entry name" value="Gmad1"/>
    <property type="match status" value="1"/>
</dbReference>
<dbReference type="SMART" id="SM00909">
    <property type="entry name" value="Germane"/>
    <property type="match status" value="1"/>
</dbReference>
<dbReference type="PROSITE" id="PS51257">
    <property type="entry name" value="PROKAR_LIPOPROTEIN"/>
    <property type="match status" value="1"/>
</dbReference>
<feature type="signal peptide" evidence="1">
    <location>
        <begin position="1"/>
        <end position="17"/>
    </location>
</feature>
<feature type="chain" id="PRO_0000286722" description="Lipoprotein LpqB">
    <location>
        <begin position="18"/>
        <end position="585"/>
    </location>
</feature>
<feature type="region of interest" description="Disordered" evidence="2">
    <location>
        <begin position="24"/>
        <end position="46"/>
    </location>
</feature>
<feature type="region of interest" description="Disordered" evidence="2">
    <location>
        <begin position="560"/>
        <end position="585"/>
    </location>
</feature>
<feature type="lipid moiety-binding region" description="N-palmitoyl cysteine" evidence="1">
    <location>
        <position position="18"/>
    </location>
</feature>
<feature type="lipid moiety-binding region" description="S-diacylglycerol cysteine" evidence="1">
    <location>
        <position position="18"/>
    </location>
</feature>
<gene>
    <name evidence="1" type="primary">lpqB</name>
</gene>
<protein>
    <recommendedName>
        <fullName evidence="1">Lipoprotein LpqB</fullName>
    </recommendedName>
</protein>
<evidence type="ECO:0000255" key="1">
    <source>
        <dbReference type="HAMAP-Rule" id="MF_01373"/>
    </source>
</evidence>
<evidence type="ECO:0000256" key="2">
    <source>
        <dbReference type="SAM" id="MobiDB-lite"/>
    </source>
</evidence>
<organism>
    <name type="scientific">Mycobacterium paratuberculosis</name>
    <dbReference type="NCBI Taxonomy" id="1770"/>
    <lineage>
        <taxon>Bacteria</taxon>
        <taxon>Bacillati</taxon>
        <taxon>Actinomycetota</taxon>
        <taxon>Actinomycetes</taxon>
        <taxon>Mycobacteriales</taxon>
        <taxon>Mycobacteriaceae</taxon>
        <taxon>Mycobacterium</taxon>
        <taxon>Mycobacterium avium complex (MAC)</taxon>
    </lineage>
</organism>
<sequence>MGRKLLGLLMLAVLLAGCAGVPSSSAPQAIGTVERPAPSNLPKPTPGMDPEVLLREFLKATADPANRHLAARQFLTQSASNAWDDAGSALLIDHVVFVETRAAERVSATMRADILGSLSDMGVFETAEGVLPDPGPIELVKTSGGWRIDRLPNGVFLDWQQFQATYKRNTLYFADPTGKTVVPDPRYVAVPDHDQLATELVSKLIAGPRPEMAHTVRNLLAPPLRLRGPVTRADGGKSGIGRGYGGARIDLEKLSTTDPHSRQLVAAQIIWTLARADIRGPYVINADGAPLDDRFRDGWTTSDVAATDPGVADGAGAGLHALVNGSLVSLDGQHTVVVPGAFGRMGDQTGAALSRNGRQVASVVTLHRGAPDMAASLWIGDLGAEAVQSADGHSLSRPTWSLDDVVWVVVDGNNVLRAIQEPASGQPARLPVDSVAVATRFPGPITDLQLSRDSTRAAMVIGGQVILASVEQTQAGQYALTYPRRLGFGLGNSVVSLSWRTGDDIVVTRTDSSHPVSYVNLDGVNSDAPPHGVQMPVTTVVANPSTAYVAGPQGVLQYSPSADGQQGWSEVPGLTVPGAAPVLPG</sequence>
<comment type="subcellular location">
    <subcellularLocation>
        <location evidence="1">Cell membrane</location>
        <topology evidence="1">Lipid-anchor</topology>
    </subcellularLocation>
</comment>
<comment type="similarity">
    <text evidence="1">Belongs to the LpqB lipoprotein family.</text>
</comment>
<name>LPQB_MYCPC</name>
<keyword id="KW-1003">Cell membrane</keyword>
<keyword id="KW-0449">Lipoprotein</keyword>
<keyword id="KW-0472">Membrane</keyword>
<keyword id="KW-0564">Palmitate</keyword>
<keyword id="KW-0732">Signal</keyword>
<proteinExistence type="inferred from homology"/>
<accession>Q93CB6</accession>
<reference key="1">
    <citation type="submission" date="2001-08" db="EMBL/GenBank/DDBJ databases">
        <title>Identification and initial characterization of the mtrAB two-component signal transduction system of Mycobacterium avium subspecies paratuberculosis.</title>
        <authorList>
            <person name="Urbanic K.W."/>
            <person name="Mutharia L.M."/>
        </authorList>
    </citation>
    <scope>NUCLEOTIDE SEQUENCE [GENOMIC DNA]</scope>
    <source>
        <strain>ATCC 19698 / DSM 44133 / CCUG 55483 / CIP 103963 / TMC 807</strain>
    </source>
</reference>